<protein>
    <recommendedName>
        <fullName evidence="1">Phosphoribosyl-ATP pyrophosphatase</fullName>
        <shortName evidence="1">PRA-PH</shortName>
        <ecNumber evidence="1">3.6.1.31</ecNumber>
    </recommendedName>
</protein>
<comment type="catalytic activity">
    <reaction evidence="1">
        <text>1-(5-phospho-beta-D-ribosyl)-ATP + H2O = 1-(5-phospho-beta-D-ribosyl)-5'-AMP + diphosphate + H(+)</text>
        <dbReference type="Rhea" id="RHEA:22828"/>
        <dbReference type="ChEBI" id="CHEBI:15377"/>
        <dbReference type="ChEBI" id="CHEBI:15378"/>
        <dbReference type="ChEBI" id="CHEBI:33019"/>
        <dbReference type="ChEBI" id="CHEBI:59457"/>
        <dbReference type="ChEBI" id="CHEBI:73183"/>
        <dbReference type="EC" id="3.6.1.31"/>
    </reaction>
</comment>
<comment type="pathway">
    <text evidence="1">Amino-acid biosynthesis; L-histidine biosynthesis; L-histidine from 5-phospho-alpha-D-ribose 1-diphosphate: step 2/9.</text>
</comment>
<comment type="subcellular location">
    <subcellularLocation>
        <location evidence="1">Cytoplasm</location>
    </subcellularLocation>
</comment>
<comment type="similarity">
    <text evidence="1">Belongs to the PRA-PH family.</text>
</comment>
<dbReference type="EC" id="3.6.1.31" evidence="1"/>
<dbReference type="EMBL" id="CP000561">
    <property type="protein sequence ID" value="ABO07573.1"/>
    <property type="molecule type" value="Genomic_DNA"/>
</dbReference>
<dbReference type="RefSeq" id="WP_011848830.1">
    <property type="nucleotide sequence ID" value="NC_009073.1"/>
</dbReference>
<dbReference type="SMR" id="A3MSF6"/>
<dbReference type="STRING" id="410359.Pcal_0135"/>
<dbReference type="GeneID" id="4909097"/>
<dbReference type="KEGG" id="pcl:Pcal_0135"/>
<dbReference type="eggNOG" id="arCOG02677">
    <property type="taxonomic scope" value="Archaea"/>
</dbReference>
<dbReference type="HOGENOM" id="CLU_123337_0_0_2"/>
<dbReference type="OrthoDB" id="39686at2157"/>
<dbReference type="UniPathway" id="UPA00031">
    <property type="reaction ID" value="UER00007"/>
</dbReference>
<dbReference type="Proteomes" id="UP000001431">
    <property type="component" value="Chromosome"/>
</dbReference>
<dbReference type="GO" id="GO:0005737">
    <property type="term" value="C:cytoplasm"/>
    <property type="evidence" value="ECO:0007669"/>
    <property type="project" value="UniProtKB-SubCell"/>
</dbReference>
<dbReference type="GO" id="GO:0005524">
    <property type="term" value="F:ATP binding"/>
    <property type="evidence" value="ECO:0007669"/>
    <property type="project" value="UniProtKB-KW"/>
</dbReference>
<dbReference type="GO" id="GO:0004636">
    <property type="term" value="F:phosphoribosyl-ATP diphosphatase activity"/>
    <property type="evidence" value="ECO:0007669"/>
    <property type="project" value="UniProtKB-UniRule"/>
</dbReference>
<dbReference type="GO" id="GO:0000105">
    <property type="term" value="P:L-histidine biosynthetic process"/>
    <property type="evidence" value="ECO:0007669"/>
    <property type="project" value="UniProtKB-UniRule"/>
</dbReference>
<dbReference type="CDD" id="cd11534">
    <property type="entry name" value="NTP-PPase_HisIE_like"/>
    <property type="match status" value="1"/>
</dbReference>
<dbReference type="FunFam" id="1.10.287.1080:FF:000002">
    <property type="entry name" value="Histidine biosynthesis bifunctional protein HisIE"/>
    <property type="match status" value="1"/>
</dbReference>
<dbReference type="Gene3D" id="1.10.287.1080">
    <property type="entry name" value="MazG-like"/>
    <property type="match status" value="1"/>
</dbReference>
<dbReference type="HAMAP" id="MF_01020">
    <property type="entry name" value="HisE"/>
    <property type="match status" value="1"/>
</dbReference>
<dbReference type="InterPro" id="IPR008179">
    <property type="entry name" value="HisE"/>
</dbReference>
<dbReference type="InterPro" id="IPR021130">
    <property type="entry name" value="PRib-ATP_PPHydrolase-like"/>
</dbReference>
<dbReference type="NCBIfam" id="TIGR03188">
    <property type="entry name" value="histidine_hisI"/>
    <property type="match status" value="1"/>
</dbReference>
<dbReference type="PANTHER" id="PTHR42945">
    <property type="entry name" value="HISTIDINE BIOSYNTHESIS BIFUNCTIONAL PROTEIN"/>
    <property type="match status" value="1"/>
</dbReference>
<dbReference type="PANTHER" id="PTHR42945:SF1">
    <property type="entry name" value="HISTIDINE BIOSYNTHESIS BIFUNCTIONAL PROTEIN HIS7"/>
    <property type="match status" value="1"/>
</dbReference>
<dbReference type="Pfam" id="PF01503">
    <property type="entry name" value="PRA-PH"/>
    <property type="match status" value="1"/>
</dbReference>
<dbReference type="SUPFAM" id="SSF101386">
    <property type="entry name" value="all-alpha NTP pyrophosphatases"/>
    <property type="match status" value="1"/>
</dbReference>
<reference key="1">
    <citation type="submission" date="2007-02" db="EMBL/GenBank/DDBJ databases">
        <title>Complete sequence of Pyrobaculum calidifontis JCM 11548.</title>
        <authorList>
            <consortium name="US DOE Joint Genome Institute"/>
            <person name="Copeland A."/>
            <person name="Lucas S."/>
            <person name="Lapidus A."/>
            <person name="Barry K."/>
            <person name="Glavina del Rio T."/>
            <person name="Dalin E."/>
            <person name="Tice H."/>
            <person name="Pitluck S."/>
            <person name="Chain P."/>
            <person name="Malfatti S."/>
            <person name="Shin M."/>
            <person name="Vergez L."/>
            <person name="Schmutz J."/>
            <person name="Larimer F."/>
            <person name="Land M."/>
            <person name="Hauser L."/>
            <person name="Kyrpides N."/>
            <person name="Mikhailova N."/>
            <person name="Cozen A.E."/>
            <person name="Fitz-Gibbon S.T."/>
            <person name="House C.H."/>
            <person name="Saltikov C."/>
            <person name="Lowe T.M."/>
            <person name="Richardson P."/>
        </authorList>
    </citation>
    <scope>NUCLEOTIDE SEQUENCE [LARGE SCALE GENOMIC DNA]</scope>
    <source>
        <strain>DSM 21063 / JCM 11548 / VA1</strain>
    </source>
</reference>
<proteinExistence type="inferred from homology"/>
<name>HIS2_PYRCJ</name>
<gene>
    <name evidence="1" type="primary">hisE</name>
    <name type="ordered locus">Pcal_0135</name>
</gene>
<feature type="chain" id="PRO_1000063375" description="Phosphoribosyl-ATP pyrophosphatase">
    <location>
        <begin position="1"/>
        <end position="94"/>
    </location>
</feature>
<organism>
    <name type="scientific">Pyrobaculum calidifontis (strain DSM 21063 / JCM 11548 / VA1)</name>
    <dbReference type="NCBI Taxonomy" id="410359"/>
    <lineage>
        <taxon>Archaea</taxon>
        <taxon>Thermoproteota</taxon>
        <taxon>Thermoprotei</taxon>
        <taxon>Thermoproteales</taxon>
        <taxon>Thermoproteaceae</taxon>
        <taxon>Pyrobaculum</taxon>
    </lineage>
</organism>
<evidence type="ECO:0000255" key="1">
    <source>
        <dbReference type="HAMAP-Rule" id="MF_01020"/>
    </source>
</evidence>
<accession>A3MSF6</accession>
<sequence>MSCHVLERLEEVIRQRIREGNPQSYTYRLYSSGLHNVARKVGEEAVETAVAALAEGEERLVQEAADLLYHLLVLLAAKGLALADVCKELERRMK</sequence>
<keyword id="KW-0028">Amino-acid biosynthesis</keyword>
<keyword id="KW-0067">ATP-binding</keyword>
<keyword id="KW-0963">Cytoplasm</keyword>
<keyword id="KW-0368">Histidine biosynthesis</keyword>
<keyword id="KW-0378">Hydrolase</keyword>
<keyword id="KW-0547">Nucleotide-binding</keyword>